<evidence type="ECO:0000255" key="1">
    <source>
        <dbReference type="HAMAP-Rule" id="MF_00019"/>
    </source>
</evidence>
<name>PLSX_CHLAB</name>
<gene>
    <name evidence="1" type="primary">plsX</name>
    <name type="ordered locus">CAB777</name>
</gene>
<accession>Q5L575</accession>
<keyword id="KW-0963">Cytoplasm</keyword>
<keyword id="KW-0444">Lipid biosynthesis</keyword>
<keyword id="KW-0443">Lipid metabolism</keyword>
<keyword id="KW-0594">Phospholipid biosynthesis</keyword>
<keyword id="KW-1208">Phospholipid metabolism</keyword>
<keyword id="KW-0808">Transferase</keyword>
<dbReference type="EC" id="2.3.1.274" evidence="1"/>
<dbReference type="EMBL" id="CR848038">
    <property type="protein sequence ID" value="CAH64219.1"/>
    <property type="molecule type" value="Genomic_DNA"/>
</dbReference>
<dbReference type="RefSeq" id="WP_011097328.1">
    <property type="nucleotide sequence ID" value="NC_004552.2"/>
</dbReference>
<dbReference type="SMR" id="Q5L575"/>
<dbReference type="GeneID" id="93024328"/>
<dbReference type="KEGG" id="cab:CAB777"/>
<dbReference type="eggNOG" id="COG0416">
    <property type="taxonomic scope" value="Bacteria"/>
</dbReference>
<dbReference type="HOGENOM" id="CLU_039379_1_1_0"/>
<dbReference type="OrthoDB" id="9806408at2"/>
<dbReference type="UniPathway" id="UPA00085"/>
<dbReference type="Proteomes" id="UP000001012">
    <property type="component" value="Chromosome"/>
</dbReference>
<dbReference type="GO" id="GO:0005737">
    <property type="term" value="C:cytoplasm"/>
    <property type="evidence" value="ECO:0007669"/>
    <property type="project" value="UniProtKB-SubCell"/>
</dbReference>
<dbReference type="GO" id="GO:0043811">
    <property type="term" value="F:phosphate:acyl-[acyl carrier protein] acyltransferase activity"/>
    <property type="evidence" value="ECO:0007669"/>
    <property type="project" value="UniProtKB-UniRule"/>
</dbReference>
<dbReference type="GO" id="GO:0006633">
    <property type="term" value="P:fatty acid biosynthetic process"/>
    <property type="evidence" value="ECO:0007669"/>
    <property type="project" value="UniProtKB-UniRule"/>
</dbReference>
<dbReference type="GO" id="GO:0008654">
    <property type="term" value="P:phospholipid biosynthetic process"/>
    <property type="evidence" value="ECO:0007669"/>
    <property type="project" value="UniProtKB-KW"/>
</dbReference>
<dbReference type="Gene3D" id="3.40.718.10">
    <property type="entry name" value="Isopropylmalate Dehydrogenase"/>
    <property type="match status" value="1"/>
</dbReference>
<dbReference type="HAMAP" id="MF_00019">
    <property type="entry name" value="PlsX"/>
    <property type="match status" value="1"/>
</dbReference>
<dbReference type="InterPro" id="IPR003664">
    <property type="entry name" value="FA_synthesis"/>
</dbReference>
<dbReference type="InterPro" id="IPR012281">
    <property type="entry name" value="Phospholipid_synth_PlsX-like"/>
</dbReference>
<dbReference type="NCBIfam" id="TIGR00182">
    <property type="entry name" value="plsX"/>
    <property type="match status" value="1"/>
</dbReference>
<dbReference type="NCBIfam" id="NF010420">
    <property type="entry name" value="PRK13846.1"/>
    <property type="match status" value="1"/>
</dbReference>
<dbReference type="PANTHER" id="PTHR30100">
    <property type="entry name" value="FATTY ACID/PHOSPHOLIPID SYNTHESIS PROTEIN PLSX"/>
    <property type="match status" value="1"/>
</dbReference>
<dbReference type="PANTHER" id="PTHR30100:SF1">
    <property type="entry name" value="PHOSPHATE ACYLTRANSFERASE"/>
    <property type="match status" value="1"/>
</dbReference>
<dbReference type="Pfam" id="PF02504">
    <property type="entry name" value="FA_synthesis"/>
    <property type="match status" value="1"/>
</dbReference>
<dbReference type="PIRSF" id="PIRSF002465">
    <property type="entry name" value="Phsphlp_syn_PlsX"/>
    <property type="match status" value="1"/>
</dbReference>
<dbReference type="SUPFAM" id="SSF53659">
    <property type="entry name" value="Isocitrate/Isopropylmalate dehydrogenase-like"/>
    <property type="match status" value="1"/>
</dbReference>
<sequence length="316" mass="34414">MNVQIGIDLMGGDHSPLVIWEVLIDVLNSRASNSHISFTAFASHEVKEQILSHSTYKGYPEVIASESFITMEDSPLSAIRKKSSSMALGLDYLKEDKIDALISTGNTAALITLSRTKIPMFPTVRRPALLVRVPTMRGCAVILDVGANVSVNPEEMLGFARMGLAYKQCLGDTEHPTVGLLNIGSEERKGTEAHRLTFRLLRETFQHAFLGNIESGDVFSGSVDVVVSDGFTGNIFLKTAEGVFDFLSHILGDKLESDVKRQLDYTIYPGSMVCGLSKLVIKCHGKACGRSLFNGISGSIDLVRARVCERILSSLS</sequence>
<protein>
    <recommendedName>
        <fullName evidence="1">Phosphate acyltransferase</fullName>
        <ecNumber evidence="1">2.3.1.274</ecNumber>
    </recommendedName>
    <alternativeName>
        <fullName evidence="1">Acyl-ACP phosphotransacylase</fullName>
    </alternativeName>
    <alternativeName>
        <fullName evidence="1">Acyl-[acyl-carrier-protein]--phosphate acyltransferase</fullName>
    </alternativeName>
    <alternativeName>
        <fullName evidence="1">Phosphate-acyl-ACP acyltransferase</fullName>
    </alternativeName>
</protein>
<reference key="1">
    <citation type="journal article" date="2005" name="Genome Res.">
        <title>The Chlamydophila abortus genome sequence reveals an array of variable proteins that contribute to interspecies variation.</title>
        <authorList>
            <person name="Thomson N.R."/>
            <person name="Yeats C."/>
            <person name="Bell K."/>
            <person name="Holden M.T.G."/>
            <person name="Bentley S.D."/>
            <person name="Livingstone M."/>
            <person name="Cerdeno-Tarraga A.-M."/>
            <person name="Harris B."/>
            <person name="Doggett J."/>
            <person name="Ormond D."/>
            <person name="Mungall K."/>
            <person name="Clarke K."/>
            <person name="Feltwell T."/>
            <person name="Hance Z."/>
            <person name="Sanders M."/>
            <person name="Quail M.A."/>
            <person name="Price C."/>
            <person name="Barrell B.G."/>
            <person name="Parkhill J."/>
            <person name="Longbottom D."/>
        </authorList>
    </citation>
    <scope>NUCLEOTIDE SEQUENCE [LARGE SCALE GENOMIC DNA]</scope>
    <source>
        <strain>DSM 27085 / S26/3</strain>
    </source>
</reference>
<proteinExistence type="inferred from homology"/>
<feature type="chain" id="PRO_0000329213" description="Phosphate acyltransferase">
    <location>
        <begin position="1"/>
        <end position="316"/>
    </location>
</feature>
<organism>
    <name type="scientific">Chlamydia abortus (strain DSM 27085 / S26/3)</name>
    <name type="common">Chlamydophila abortus</name>
    <dbReference type="NCBI Taxonomy" id="218497"/>
    <lineage>
        <taxon>Bacteria</taxon>
        <taxon>Pseudomonadati</taxon>
        <taxon>Chlamydiota</taxon>
        <taxon>Chlamydiia</taxon>
        <taxon>Chlamydiales</taxon>
        <taxon>Chlamydiaceae</taxon>
        <taxon>Chlamydia/Chlamydophila group</taxon>
        <taxon>Chlamydia</taxon>
    </lineage>
</organism>
<comment type="function">
    <text evidence="1">Catalyzes the reversible formation of acyl-phosphate (acyl-PO(4)) from acyl-[acyl-carrier-protein] (acyl-ACP). This enzyme utilizes acyl-ACP as fatty acyl donor, but not acyl-CoA.</text>
</comment>
<comment type="catalytic activity">
    <reaction evidence="1">
        <text>a fatty acyl-[ACP] + phosphate = an acyl phosphate + holo-[ACP]</text>
        <dbReference type="Rhea" id="RHEA:42292"/>
        <dbReference type="Rhea" id="RHEA-COMP:9685"/>
        <dbReference type="Rhea" id="RHEA-COMP:14125"/>
        <dbReference type="ChEBI" id="CHEBI:43474"/>
        <dbReference type="ChEBI" id="CHEBI:59918"/>
        <dbReference type="ChEBI" id="CHEBI:64479"/>
        <dbReference type="ChEBI" id="CHEBI:138651"/>
        <dbReference type="EC" id="2.3.1.274"/>
    </reaction>
</comment>
<comment type="pathway">
    <text evidence="1">Lipid metabolism; phospholipid metabolism.</text>
</comment>
<comment type="subunit">
    <text evidence="1">Homodimer. Probably interacts with PlsY.</text>
</comment>
<comment type="subcellular location">
    <subcellularLocation>
        <location evidence="1">Cytoplasm</location>
    </subcellularLocation>
    <text evidence="1">Associated with the membrane possibly through PlsY.</text>
</comment>
<comment type="similarity">
    <text evidence="1">Belongs to the PlsX family.</text>
</comment>